<feature type="chain" id="PRO_0000215466" description="Poly(3-hydroxyalkanoate) polymerase 2">
    <location>
        <begin position="1"/>
        <end position="560"/>
    </location>
</feature>
<feature type="active site" evidence="1">
    <location>
        <position position="296"/>
    </location>
</feature>
<comment type="function">
    <text evidence="2">Synthesizes poly(3-hydroxyalkanoates) (PHA), complements a mutant of P.putida that does not make PHA.</text>
</comment>
<comment type="pathway">
    <text>Biopolymer metabolism; poly-(R)-3-hydroxybutanoate biosynthesis.</text>
</comment>
<comment type="miscellaneous">
    <text evidence="6">P.oleovorans accumulates poly(3-hydroxyalkanoates) after growth on medium chain length hydrocarbons. Large amounts of this polyester are synthesized when cells are grown under nitrogen-limiting conditions. When nitrogen is resupplied in the medium, the accumulated PHA is degraded.</text>
</comment>
<comment type="similarity">
    <text evidence="5">Belongs to the PHA/PHB synthase family. Type II PhaC subfamily.</text>
</comment>
<dbReference type="EC" id="2.3.1.-"/>
<dbReference type="EMBL" id="M58445">
    <property type="protein sequence ID" value="AAA25934.1"/>
    <property type="molecule type" value="Genomic_DNA"/>
</dbReference>
<dbReference type="PIR" id="C38604">
    <property type="entry name" value="C38604"/>
</dbReference>
<dbReference type="SMR" id="P26496"/>
<dbReference type="ESTHER" id="pseol-phac">
    <property type="family name" value="PHA_synth_II"/>
</dbReference>
<dbReference type="UniPathway" id="UPA00917"/>
<dbReference type="GO" id="GO:0016746">
    <property type="term" value="F:acyltransferase activity"/>
    <property type="evidence" value="ECO:0007669"/>
    <property type="project" value="UniProtKB-KW"/>
</dbReference>
<dbReference type="GO" id="GO:0042621">
    <property type="term" value="P:poly(3-hydroxyalkanoate) biosynthetic process"/>
    <property type="evidence" value="ECO:0007669"/>
    <property type="project" value="UniProtKB-KW"/>
</dbReference>
<dbReference type="GO" id="GO:0042619">
    <property type="term" value="P:poly-hydroxybutyrate biosynthetic process"/>
    <property type="evidence" value="ECO:0007669"/>
    <property type="project" value="UniProtKB-KW"/>
</dbReference>
<dbReference type="Gene3D" id="3.40.50.1820">
    <property type="entry name" value="alpha/beta hydrolase"/>
    <property type="match status" value="1"/>
</dbReference>
<dbReference type="InterPro" id="IPR029058">
    <property type="entry name" value="AB_hydrolase_fold"/>
</dbReference>
<dbReference type="InterPro" id="IPR051321">
    <property type="entry name" value="PHA/PHB_synthase"/>
</dbReference>
<dbReference type="InterPro" id="IPR011287">
    <property type="entry name" value="PHA_synth_II"/>
</dbReference>
<dbReference type="InterPro" id="IPR010941">
    <property type="entry name" value="PhaC_N"/>
</dbReference>
<dbReference type="NCBIfam" id="TIGR01839">
    <property type="entry name" value="PHA_synth_II"/>
    <property type="match status" value="1"/>
</dbReference>
<dbReference type="PANTHER" id="PTHR36837">
    <property type="entry name" value="POLY(3-HYDROXYALKANOATE) POLYMERASE SUBUNIT PHAC"/>
    <property type="match status" value="1"/>
</dbReference>
<dbReference type="PANTHER" id="PTHR36837:SF5">
    <property type="entry name" value="POLY-3-HYDROXYBUTYRATE SYNTHASE"/>
    <property type="match status" value="1"/>
</dbReference>
<dbReference type="Pfam" id="PF07167">
    <property type="entry name" value="PhaC_N"/>
    <property type="match status" value="1"/>
</dbReference>
<dbReference type="SUPFAM" id="SSF53474">
    <property type="entry name" value="alpha/beta-Hydrolases"/>
    <property type="match status" value="1"/>
</dbReference>
<name>PHAC2_ECTOL</name>
<accession>P26496</accession>
<proteinExistence type="inferred from homology"/>
<gene>
    <name evidence="3" type="primary">phaC2</name>
</gene>
<organism>
    <name type="scientific">Ectopseudomonas oleovorans</name>
    <name type="common">Pseudomonas oleovorans</name>
    <dbReference type="NCBI Taxonomy" id="301"/>
    <lineage>
        <taxon>Bacteria</taxon>
        <taxon>Pseudomonadati</taxon>
        <taxon>Pseudomonadota</taxon>
        <taxon>Gammaproteobacteria</taxon>
        <taxon>Pseudomonadales</taxon>
        <taxon>Pseudomonadaceae</taxon>
        <taxon>Ectopseudomonas</taxon>
    </lineage>
</organism>
<evidence type="ECO:0000255" key="1"/>
<evidence type="ECO:0000269" key="2">
    <source>
    </source>
</evidence>
<evidence type="ECO:0000303" key="3">
    <source>
    </source>
</evidence>
<evidence type="ECO:0000303" key="4">
    <source>
    </source>
</evidence>
<evidence type="ECO:0000305" key="5"/>
<evidence type="ECO:0000305" key="6">
    <source>
    </source>
</evidence>
<sequence>MKDKPAKGTPTLPATSMNVQNAILGLRGRDLISTLRNVSRQSLRHPLHTAHHLLALGGQLGRVILGDTPLQPNPRDPRFSDPTWSQNPFYRRGLQAYLAWQKQTRLWIEESHLDDDDRARAHFLFNLINDALAPSNSLLNPLAVKELFNSGGQSLVRGVAHLLDDLRHNDGLPRQVDERAFEVGGNLAATAGAVVFRNELLELIQYKPMSEKQHARPLLVVPPQINKFYIFDLSSTNSFVQYMLKNGLQVFMVSWRNPDPRHREWGLSSYVQALEEALNACRSISGNRDPNLMGACAGGLTMAALQGHLQAKHQLRRVRSATYLVSLLDSKFESPASLFADEQTIEAAKRRSYQRGVLDGAEVARIFAWMRPNDLIWNYWVNNYLLGKTPPAFDILYWNADSTRLPAALHGDLLDFFKLNPLTHPAGLEVCGTPIDLQKVELDSFTVAGSNDHITPWDAVYRSALLLGGDRRFVLANSGHIQSIINPPGNPKAYYLANPKLSSDPRAWLHDAKRSEGSWWPLWLEWITARSGPLKAPRSELGNATYPPLGPAPGTYVLTR</sequence>
<reference key="1">
    <citation type="journal article" date="1991" name="J. Biol. Chem.">
        <title>Metabolism of poly(3-hydroxyalkanoates) (PHAs) by Pseudomonas oleovorans. Identification and sequences of genes and function of the encoded proteins in the synthesis and degradation of PHA.</title>
        <authorList>
            <person name="Huisman G.W."/>
            <person name="Wonink E."/>
            <person name="Meima R."/>
            <person name="Kazemier B."/>
            <person name="Terpstra P."/>
            <person name="Witholt B."/>
        </authorList>
    </citation>
    <scope>NUCLEOTIDE SEQUENCE [GENOMIC DNA]</scope>
    <scope>FUNCTION</scope>
    <source>
        <strain>GPo1</strain>
    </source>
</reference>
<reference key="2">
    <citation type="journal article" date="1992" name="FEMS Microbiol. Rev.">
        <title>Molecular basis for biosynthesis and accumulation of polyhydroxyalkanoic acids in bacteria.</title>
        <authorList>
            <person name="Steinbuechel A."/>
            <person name="Hustede E."/>
            <person name="Liebergesell M."/>
            <person name="Pieper U."/>
            <person name="Timm A."/>
            <person name="Valentin H."/>
        </authorList>
    </citation>
    <scope>GENE NAME</scope>
</reference>
<protein>
    <recommendedName>
        <fullName>Poly(3-hydroxyalkanoate) polymerase 2</fullName>
        <shortName evidence="4">PHA polymerase 2</shortName>
        <ecNumber>2.3.1.-</ecNumber>
    </recommendedName>
    <alternativeName>
        <fullName evidence="4">ORF3</fullName>
    </alternativeName>
    <alternativeName>
        <fullName>PHA synthase 2</fullName>
    </alternativeName>
    <alternativeName>
        <fullName>Polyhydroxyalkanoic acid synthase 2</fullName>
    </alternativeName>
</protein>
<keyword id="KW-0012">Acyltransferase</keyword>
<keyword id="KW-0577">PHA biosynthesis</keyword>
<keyword id="KW-0583">PHB biosynthesis</keyword>
<keyword id="KW-0808">Transferase</keyword>